<comment type="subunit">
    <text evidence="1">Part of the 50S ribosomal subunit.</text>
</comment>
<comment type="similarity">
    <text evidence="1">Belongs to the universal ribosomal protein uL30 family.</text>
</comment>
<proteinExistence type="inferred from homology"/>
<keyword id="KW-1185">Reference proteome</keyword>
<keyword id="KW-0687">Ribonucleoprotein</keyword>
<keyword id="KW-0689">Ribosomal protein</keyword>
<evidence type="ECO:0000255" key="1">
    <source>
        <dbReference type="HAMAP-Rule" id="MF_01371"/>
    </source>
</evidence>
<evidence type="ECO:0000305" key="2"/>
<name>RL30_STAMF</name>
<protein>
    <recommendedName>
        <fullName evidence="1">Large ribosomal subunit protein uL30</fullName>
    </recommendedName>
    <alternativeName>
        <fullName evidence="2">50S ribosomal protein L30</fullName>
    </alternativeName>
</protein>
<feature type="chain" id="PRO_1000087270" description="Large ribosomal subunit protein uL30">
    <location>
        <begin position="1"/>
        <end position="162"/>
    </location>
</feature>
<reference key="1">
    <citation type="journal article" date="2009" name="BMC Genomics">
        <title>The complete genome sequence of Staphylothermus marinus reveals differences in sulfur metabolism among heterotrophic Crenarchaeota.</title>
        <authorList>
            <person name="Anderson I.J."/>
            <person name="Dharmarajan L."/>
            <person name="Rodriguez J."/>
            <person name="Hooper S."/>
            <person name="Porat I."/>
            <person name="Ulrich L.E."/>
            <person name="Elkins J.G."/>
            <person name="Mavromatis K."/>
            <person name="Sun H."/>
            <person name="Land M."/>
            <person name="Lapidus A."/>
            <person name="Lucas S."/>
            <person name="Barry K."/>
            <person name="Huber H."/>
            <person name="Zhulin I.B."/>
            <person name="Whitman W.B."/>
            <person name="Mukhopadhyay B."/>
            <person name="Woese C."/>
            <person name="Bristow J."/>
            <person name="Kyrpides N."/>
        </authorList>
    </citation>
    <scope>NUCLEOTIDE SEQUENCE [LARGE SCALE GENOMIC DNA]</scope>
    <source>
        <strain>ATCC 43588 / DSM 3639 / JCM 9404 / F1</strain>
    </source>
</reference>
<reference key="2">
    <citation type="journal article" date="2009" name="Stand. Genomic Sci.">
        <title>Complete genome sequence of Staphylothermus marinus Stetter and Fiala 1986 type strain F1.</title>
        <authorList>
            <person name="Anderson I.J."/>
            <person name="Sun H."/>
            <person name="Lapidus A."/>
            <person name="Copeland A."/>
            <person name="Glavina Del Rio T."/>
            <person name="Tice H."/>
            <person name="Dalin E."/>
            <person name="Lucas S."/>
            <person name="Barry K."/>
            <person name="Land M."/>
            <person name="Richardson P."/>
            <person name="Huber H."/>
            <person name="Kyrpides N.C."/>
        </authorList>
    </citation>
    <scope>NUCLEOTIDE SEQUENCE [LARGE SCALE GENOMIC DNA]</scope>
    <source>
        <strain>ATCC 43588 / DSM 3639 / JCM 9404 / F1</strain>
    </source>
</reference>
<sequence length="162" mass="18714">MPDLYAIIRIRGRLDVPPDVDYTLKLLRLHKKFHMVIYPSNQPGLKGMLQKAKDWITWGEINYETLVELLRKRGRTLGNKPLTDEFVDKYLSKYGIYGGIQGLAKALLEGKIKLHKLEVIKPVFRLHPPRGGFKRSTKRPFNDGGELGYRGKSINELIKRML</sequence>
<dbReference type="EMBL" id="CP000575">
    <property type="protein sequence ID" value="ABN70138.1"/>
    <property type="molecule type" value="Genomic_DNA"/>
</dbReference>
<dbReference type="RefSeq" id="WP_011839329.1">
    <property type="nucleotide sequence ID" value="NC_009033.1"/>
</dbReference>
<dbReference type="SMR" id="A3DNC8"/>
<dbReference type="STRING" id="399550.Smar_1040"/>
<dbReference type="GeneID" id="4906940"/>
<dbReference type="KEGG" id="smr:Smar_1040"/>
<dbReference type="eggNOG" id="arCOG04086">
    <property type="taxonomic scope" value="Archaea"/>
</dbReference>
<dbReference type="HOGENOM" id="CLU_055156_6_0_2"/>
<dbReference type="OrthoDB" id="6379at2157"/>
<dbReference type="Proteomes" id="UP000000254">
    <property type="component" value="Chromosome"/>
</dbReference>
<dbReference type="GO" id="GO:0022625">
    <property type="term" value="C:cytosolic large ribosomal subunit"/>
    <property type="evidence" value="ECO:0007669"/>
    <property type="project" value="TreeGrafter"/>
</dbReference>
<dbReference type="GO" id="GO:0003723">
    <property type="term" value="F:RNA binding"/>
    <property type="evidence" value="ECO:0007669"/>
    <property type="project" value="TreeGrafter"/>
</dbReference>
<dbReference type="GO" id="GO:0003735">
    <property type="term" value="F:structural constituent of ribosome"/>
    <property type="evidence" value="ECO:0007669"/>
    <property type="project" value="InterPro"/>
</dbReference>
<dbReference type="GO" id="GO:0000463">
    <property type="term" value="P:maturation of LSU-rRNA from tricistronic rRNA transcript (SSU-rRNA, 5.8S rRNA, LSU-rRNA)"/>
    <property type="evidence" value="ECO:0007669"/>
    <property type="project" value="TreeGrafter"/>
</dbReference>
<dbReference type="GO" id="GO:0006412">
    <property type="term" value="P:translation"/>
    <property type="evidence" value="ECO:0007669"/>
    <property type="project" value="UniProtKB-UniRule"/>
</dbReference>
<dbReference type="CDD" id="cd01657">
    <property type="entry name" value="Ribosomal_L7_archeal_euk"/>
    <property type="match status" value="1"/>
</dbReference>
<dbReference type="Gene3D" id="1.10.15.30">
    <property type="match status" value="1"/>
</dbReference>
<dbReference type="Gene3D" id="3.30.1390.20">
    <property type="entry name" value="Ribosomal protein L30, ferredoxin-like fold domain"/>
    <property type="match status" value="1"/>
</dbReference>
<dbReference type="HAMAP" id="MF_01371_A">
    <property type="entry name" value="Ribosomal_uL30_A"/>
    <property type="match status" value="1"/>
</dbReference>
<dbReference type="InterPro" id="IPR036919">
    <property type="entry name" value="Ribo_uL30_ferredoxin-like_sf"/>
</dbReference>
<dbReference type="InterPro" id="IPR039699">
    <property type="entry name" value="Ribosomal_uL30"/>
</dbReference>
<dbReference type="InterPro" id="IPR005997">
    <property type="entry name" value="Ribosomal_uL30_arc"/>
</dbReference>
<dbReference type="InterPro" id="IPR035808">
    <property type="entry name" value="Ribosomal_uL30_euk_arc"/>
</dbReference>
<dbReference type="InterPro" id="IPR016082">
    <property type="entry name" value="Ribosomal_uL30_ferredoxin-like"/>
</dbReference>
<dbReference type="NCBIfam" id="NF004711">
    <property type="entry name" value="PRK06049.1"/>
    <property type="match status" value="1"/>
</dbReference>
<dbReference type="NCBIfam" id="TIGR01309">
    <property type="entry name" value="uL30_arch"/>
    <property type="match status" value="1"/>
</dbReference>
<dbReference type="PANTHER" id="PTHR11524">
    <property type="entry name" value="60S RIBOSOMAL PROTEIN L7"/>
    <property type="match status" value="1"/>
</dbReference>
<dbReference type="PANTHER" id="PTHR11524:SF16">
    <property type="entry name" value="LARGE RIBOSOMAL SUBUNIT PROTEIN UL30"/>
    <property type="match status" value="1"/>
</dbReference>
<dbReference type="Pfam" id="PF00327">
    <property type="entry name" value="Ribosomal_L30"/>
    <property type="match status" value="1"/>
</dbReference>
<dbReference type="SUPFAM" id="SSF55129">
    <property type="entry name" value="Ribosomal protein L30p/L7e"/>
    <property type="match status" value="1"/>
</dbReference>
<organism>
    <name type="scientific">Staphylothermus marinus (strain ATCC 43588 / DSM 3639 / JCM 9404 / F1)</name>
    <dbReference type="NCBI Taxonomy" id="399550"/>
    <lineage>
        <taxon>Archaea</taxon>
        <taxon>Thermoproteota</taxon>
        <taxon>Thermoprotei</taxon>
        <taxon>Desulfurococcales</taxon>
        <taxon>Desulfurococcaceae</taxon>
        <taxon>Staphylothermus</taxon>
    </lineage>
</organism>
<gene>
    <name evidence="1" type="primary">rpl30</name>
    <name type="ordered locus">Smar_1040</name>
</gene>
<accession>A3DNC8</accession>